<protein>
    <recommendedName>
        <fullName>Cofilin</fullName>
    </recommendedName>
    <alternativeName>
        <fullName>Actin-depolymerizing factor 1</fullName>
    </alternativeName>
</protein>
<gene>
    <name type="primary">COF1</name>
    <name type="ordered locus">YLL050C</name>
    <name type="ORF">L0596</name>
</gene>
<sequence>MSRSGVAVADESLTAFNDLKLGKKYKFILFGLNDAKTEIVVKETSTDPSYDAFLEKLPENDCLYAIYDFEYEINGNEGKRSKIVFFTWSPDTAPVRSKMVYASSKDALRRALNGVSTDVQGTDFSEVSYDSVLERVSRGAGSH</sequence>
<feature type="chain" id="PRO_0000214915" description="Cofilin">
    <location>
        <begin position="1"/>
        <end position="143"/>
    </location>
</feature>
<feature type="domain" description="ADF-H" evidence="1">
    <location>
        <begin position="5"/>
        <end position="137"/>
    </location>
</feature>
<feature type="modified residue" description="Phosphoserine" evidence="7 8">
    <location>
        <position position="4"/>
    </location>
</feature>
<feature type="mutagenesis site" description="Reduced interaction with PIP2." evidence="4">
    <original>KD</original>
    <variation>AA</variation>
    <location>
        <begin position="105"/>
        <end position="106"/>
    </location>
</feature>
<feature type="mutagenesis site" description="Defects in actin monomer interaction." evidence="4">
    <original>RR</original>
    <variation>AA</variation>
    <location>
        <begin position="109"/>
        <end position="110"/>
    </location>
</feature>
<feature type="sequence conflict" description="In Ref. 3; CAA88007." evidence="6" ref="3">
    <original>MSRSG</original>
    <variation>MWGKKFIRSQENVKFLCS</variation>
    <location>
        <begin position="1"/>
        <end position="5"/>
    </location>
</feature>
<feature type="helix" evidence="11">
    <location>
        <begin position="10"/>
        <end position="22"/>
    </location>
</feature>
<feature type="strand" evidence="11">
    <location>
        <begin position="26"/>
        <end position="32"/>
    </location>
</feature>
<feature type="strand" evidence="11">
    <location>
        <begin position="36"/>
        <end position="45"/>
    </location>
</feature>
<feature type="helix" evidence="11">
    <location>
        <begin position="50"/>
        <end position="54"/>
    </location>
</feature>
<feature type="strand" evidence="11">
    <location>
        <begin position="63"/>
        <end position="71"/>
    </location>
</feature>
<feature type="strand" evidence="9">
    <location>
        <begin position="74"/>
        <end position="76"/>
    </location>
</feature>
<feature type="strand" evidence="11">
    <location>
        <begin position="80"/>
        <end position="88"/>
    </location>
</feature>
<feature type="strand" evidence="10">
    <location>
        <begin position="91"/>
        <end position="93"/>
    </location>
</feature>
<feature type="helix" evidence="11">
    <location>
        <begin position="95"/>
        <end position="111"/>
    </location>
</feature>
<feature type="strand" evidence="11">
    <location>
        <begin position="117"/>
        <end position="123"/>
    </location>
</feature>
<feature type="helix" evidence="11">
    <location>
        <begin position="125"/>
        <end position="127"/>
    </location>
</feature>
<feature type="helix" evidence="11">
    <location>
        <begin position="129"/>
        <end position="137"/>
    </location>
</feature>
<keyword id="KW-0002">3D-structure</keyword>
<keyword id="KW-0009">Actin-binding</keyword>
<keyword id="KW-0963">Cytoplasm</keyword>
<keyword id="KW-0206">Cytoskeleton</keyword>
<keyword id="KW-0903">Direct protein sequencing</keyword>
<keyword id="KW-0539">Nucleus</keyword>
<keyword id="KW-0597">Phosphoprotein</keyword>
<keyword id="KW-1185">Reference proteome</keyword>
<evidence type="ECO:0000255" key="1">
    <source>
        <dbReference type="PROSITE-ProRule" id="PRU00599"/>
    </source>
</evidence>
<evidence type="ECO:0000269" key="2">
    <source>
    </source>
</evidence>
<evidence type="ECO:0000269" key="3">
    <source>
    </source>
</evidence>
<evidence type="ECO:0000269" key="4">
    <source>
    </source>
</evidence>
<evidence type="ECO:0000269" key="5">
    <source>
    </source>
</evidence>
<evidence type="ECO:0000305" key="6"/>
<evidence type="ECO:0007744" key="7">
    <source>
    </source>
</evidence>
<evidence type="ECO:0007744" key="8">
    <source>
    </source>
</evidence>
<evidence type="ECO:0007829" key="9">
    <source>
        <dbReference type="PDB" id="1CFY"/>
    </source>
</evidence>
<evidence type="ECO:0007829" key="10">
    <source>
        <dbReference type="PDB" id="1QPV"/>
    </source>
</evidence>
<evidence type="ECO:0007829" key="11">
    <source>
        <dbReference type="PDB" id="4KEF"/>
    </source>
</evidence>
<name>COFI_YEAST</name>
<dbReference type="EMBL" id="Z14971">
    <property type="protein sequence ID" value="CAA78694.1"/>
    <property type="molecule type" value="Genomic_DNA"/>
</dbReference>
<dbReference type="EMBL" id="S52662">
    <property type="protein sequence ID" value="AAA13256.1"/>
    <property type="molecule type" value="Genomic_DNA"/>
</dbReference>
<dbReference type="EMBL" id="D13230">
    <property type="protein sequence ID" value="BAA02514.1"/>
    <property type="molecule type" value="Genomic_DNA"/>
</dbReference>
<dbReference type="EMBL" id="Z47973">
    <property type="protein sequence ID" value="CAA88007.1"/>
    <property type="molecule type" value="Genomic_DNA"/>
</dbReference>
<dbReference type="EMBL" id="Z73155">
    <property type="protein sequence ID" value="CAA97502.1"/>
    <property type="molecule type" value="Genomic_DNA"/>
</dbReference>
<dbReference type="EMBL" id="BK006945">
    <property type="protein sequence ID" value="DAA09274.1"/>
    <property type="molecule type" value="Genomic_DNA"/>
</dbReference>
<dbReference type="PIR" id="A44397">
    <property type="entry name" value="A44397"/>
</dbReference>
<dbReference type="RefSeq" id="NP_013050.1">
    <property type="nucleotide sequence ID" value="NM_001181870.1"/>
</dbReference>
<dbReference type="PDB" id="1CFY">
    <property type="method" value="X-ray"/>
    <property type="resolution" value="2.30 A"/>
    <property type="chains" value="A/B=1-143"/>
</dbReference>
<dbReference type="PDB" id="1COF">
    <property type="method" value="X-ray"/>
    <property type="resolution" value="2.30 A"/>
    <property type="chains" value="A=1-143"/>
</dbReference>
<dbReference type="PDB" id="1QPV">
    <property type="method" value="X-ray"/>
    <property type="resolution" value="3.00 A"/>
    <property type="chains" value="A=1-143"/>
</dbReference>
<dbReference type="PDB" id="4KED">
    <property type="method" value="X-ray"/>
    <property type="resolution" value="1.90 A"/>
    <property type="chains" value="A/B=2-143"/>
</dbReference>
<dbReference type="PDB" id="4KEE">
    <property type="method" value="X-ray"/>
    <property type="resolution" value="1.45 A"/>
    <property type="chains" value="A=2-143"/>
</dbReference>
<dbReference type="PDB" id="4KEF">
    <property type="method" value="X-ray"/>
    <property type="resolution" value="1.10 A"/>
    <property type="chains" value="A=2-143"/>
</dbReference>
<dbReference type="PDBsum" id="1CFY"/>
<dbReference type="PDBsum" id="1COF"/>
<dbReference type="PDBsum" id="1QPV"/>
<dbReference type="PDBsum" id="4KED"/>
<dbReference type="PDBsum" id="4KEE"/>
<dbReference type="PDBsum" id="4KEF"/>
<dbReference type="SMR" id="Q03048"/>
<dbReference type="BioGRID" id="31265">
    <property type="interactions" value="540"/>
</dbReference>
<dbReference type="DIP" id="DIP-197N"/>
<dbReference type="FunCoup" id="Q03048">
    <property type="interactions" value="1009"/>
</dbReference>
<dbReference type="IntAct" id="Q03048">
    <property type="interactions" value="60"/>
</dbReference>
<dbReference type="MINT" id="Q03048"/>
<dbReference type="STRING" id="4932.YLL050C"/>
<dbReference type="iPTMnet" id="Q03048"/>
<dbReference type="PaxDb" id="4932-YLL050C"/>
<dbReference type="PeptideAtlas" id="Q03048"/>
<dbReference type="TopDownProteomics" id="Q03048"/>
<dbReference type="EnsemblFungi" id="YLL050C_mRNA">
    <property type="protein sequence ID" value="YLL050C"/>
    <property type="gene ID" value="YLL050C"/>
</dbReference>
<dbReference type="GeneID" id="850676"/>
<dbReference type="KEGG" id="sce:YLL050C"/>
<dbReference type="AGR" id="SGD:S000003973"/>
<dbReference type="SGD" id="S000003973">
    <property type="gene designation" value="COF1"/>
</dbReference>
<dbReference type="VEuPathDB" id="FungiDB:YLL050C"/>
<dbReference type="eggNOG" id="KOG1735">
    <property type="taxonomic scope" value="Eukaryota"/>
</dbReference>
<dbReference type="GeneTree" id="ENSGT00950000183000"/>
<dbReference type="HOGENOM" id="CLU_094004_3_2_1"/>
<dbReference type="InParanoid" id="Q03048"/>
<dbReference type="OMA" id="QCRFAVY"/>
<dbReference type="OrthoDB" id="10249245at2759"/>
<dbReference type="BioCyc" id="YEAST:G3O-32149-MONOMER"/>
<dbReference type="BioGRID-ORCS" id="850676">
    <property type="hits" value="1 hit in 10 CRISPR screens"/>
</dbReference>
<dbReference type="EvolutionaryTrace" id="Q03048"/>
<dbReference type="PRO" id="PR:Q03048"/>
<dbReference type="Proteomes" id="UP000002311">
    <property type="component" value="Chromosome XII"/>
</dbReference>
<dbReference type="RNAct" id="Q03048">
    <property type="molecule type" value="protein"/>
</dbReference>
<dbReference type="GO" id="GO:0030479">
    <property type="term" value="C:actin cortical patch"/>
    <property type="evidence" value="ECO:0000314"/>
    <property type="project" value="SGD"/>
</dbReference>
<dbReference type="GO" id="GO:0015629">
    <property type="term" value="C:actin cytoskeleton"/>
    <property type="evidence" value="ECO:0000314"/>
    <property type="project" value="UniProtKB"/>
</dbReference>
<dbReference type="GO" id="GO:0005737">
    <property type="term" value="C:cytoplasm"/>
    <property type="evidence" value="ECO:0000318"/>
    <property type="project" value="GO_Central"/>
</dbReference>
<dbReference type="GO" id="GO:0016363">
    <property type="term" value="C:nuclear matrix"/>
    <property type="evidence" value="ECO:0007669"/>
    <property type="project" value="UniProtKB-SubCell"/>
</dbReference>
<dbReference type="GO" id="GO:0005886">
    <property type="term" value="C:plasma membrane"/>
    <property type="evidence" value="ECO:0007005"/>
    <property type="project" value="SGD"/>
</dbReference>
<dbReference type="GO" id="GO:0051015">
    <property type="term" value="F:actin filament binding"/>
    <property type="evidence" value="ECO:0000314"/>
    <property type="project" value="SGD"/>
</dbReference>
<dbReference type="GO" id="GO:0030042">
    <property type="term" value="P:actin filament depolymerization"/>
    <property type="evidence" value="ECO:0000314"/>
    <property type="project" value="SGD"/>
</dbReference>
<dbReference type="GO" id="GO:0007015">
    <property type="term" value="P:actin filament organization"/>
    <property type="evidence" value="ECO:0000314"/>
    <property type="project" value="SGD"/>
</dbReference>
<dbReference type="GO" id="GO:0051014">
    <property type="term" value="P:actin filament severing"/>
    <property type="evidence" value="ECO:0000314"/>
    <property type="project" value="SGD"/>
</dbReference>
<dbReference type="GO" id="GO:0006897">
    <property type="term" value="P:endocytosis"/>
    <property type="evidence" value="ECO:0000315"/>
    <property type="project" value="SGD"/>
</dbReference>
<dbReference type="GO" id="GO:0043001">
    <property type="term" value="P:Golgi to plasma membrane protein transport"/>
    <property type="evidence" value="ECO:0000315"/>
    <property type="project" value="SGD"/>
</dbReference>
<dbReference type="CDD" id="cd11286">
    <property type="entry name" value="ADF_cofilin_like"/>
    <property type="match status" value="1"/>
</dbReference>
<dbReference type="FunFam" id="3.40.20.10:FF:000060">
    <property type="entry name" value="Cofilin"/>
    <property type="match status" value="1"/>
</dbReference>
<dbReference type="Gene3D" id="3.40.20.10">
    <property type="entry name" value="Severin"/>
    <property type="match status" value="1"/>
</dbReference>
<dbReference type="InterPro" id="IPR002108">
    <property type="entry name" value="ADF-H"/>
</dbReference>
<dbReference type="InterPro" id="IPR029006">
    <property type="entry name" value="ADF-H/Gelsolin-like_dom_sf"/>
</dbReference>
<dbReference type="InterPro" id="IPR017904">
    <property type="entry name" value="ADF/Cofilin"/>
</dbReference>
<dbReference type="PANTHER" id="PTHR11913">
    <property type="entry name" value="COFILIN-RELATED"/>
    <property type="match status" value="1"/>
</dbReference>
<dbReference type="Pfam" id="PF00241">
    <property type="entry name" value="Cofilin_ADF"/>
    <property type="match status" value="1"/>
</dbReference>
<dbReference type="SMART" id="SM00102">
    <property type="entry name" value="ADF"/>
    <property type="match status" value="1"/>
</dbReference>
<dbReference type="SUPFAM" id="SSF55753">
    <property type="entry name" value="Actin depolymerizing proteins"/>
    <property type="match status" value="1"/>
</dbReference>
<dbReference type="PROSITE" id="PS51263">
    <property type="entry name" value="ADF_H"/>
    <property type="match status" value="1"/>
</dbReference>
<reference key="1">
    <citation type="journal article" date="1993" name="J. Cell Biol.">
        <title>Cofilin is an essential component of the yeast cortical cytoskeleton.</title>
        <authorList>
            <person name="Moon A.L."/>
            <person name="Janmey P.A."/>
            <person name="Louie K.A."/>
            <person name="Drubin D.G."/>
        </authorList>
    </citation>
    <scope>NUCLEOTIDE SEQUENCE [GENOMIC DNA]</scope>
    <scope>PROTEIN SEQUENCE OF 43-56; 83-98 AND 106-141</scope>
</reference>
<reference key="2">
    <citation type="journal article" date="1993" name="Gene">
        <title>Isolation of a yeast essential gene, COF1, that encodes a homologue of mammalian cofilin, a low-M(r) actin-binding and depolymerizing protein.</title>
        <authorList>
            <person name="Iida K."/>
            <person name="Moriyama K."/>
            <person name="Matsumoto S."/>
            <person name="Kawasaki H."/>
            <person name="Nishida E."/>
            <person name="Yahara I."/>
        </authorList>
    </citation>
    <scope>NUCLEOTIDE SEQUENCE [GENOMIC DNA]</scope>
</reference>
<reference key="3">
    <citation type="submission" date="1995-01" db="EMBL/GenBank/DDBJ databases">
        <title>Sequence of a 37 kb DNA fragment from chromosome XII of Saccharomyces cerevisiae including the subtelomeric region of the left arm.</title>
        <authorList>
            <person name="Wedler H."/>
            <person name="Wambutt R."/>
        </authorList>
    </citation>
    <scope>NUCLEOTIDE SEQUENCE [GENOMIC DNA]</scope>
    <source>
        <strain>ATCC 204508 / S288c</strain>
    </source>
</reference>
<reference key="4">
    <citation type="journal article" date="1997" name="Nature">
        <title>The nucleotide sequence of Saccharomyces cerevisiae chromosome XII.</title>
        <authorList>
            <person name="Johnston M."/>
            <person name="Hillier L.W."/>
            <person name="Riles L."/>
            <person name="Albermann K."/>
            <person name="Andre B."/>
            <person name="Ansorge W."/>
            <person name="Benes V."/>
            <person name="Brueckner M."/>
            <person name="Delius H."/>
            <person name="Dubois E."/>
            <person name="Duesterhoeft A."/>
            <person name="Entian K.-D."/>
            <person name="Floeth M."/>
            <person name="Goffeau A."/>
            <person name="Hebling U."/>
            <person name="Heumann K."/>
            <person name="Heuss-Neitzel D."/>
            <person name="Hilbert H."/>
            <person name="Hilger F."/>
            <person name="Kleine K."/>
            <person name="Koetter P."/>
            <person name="Louis E.J."/>
            <person name="Messenguy F."/>
            <person name="Mewes H.-W."/>
            <person name="Miosga T."/>
            <person name="Moestl D."/>
            <person name="Mueller-Auer S."/>
            <person name="Nentwich U."/>
            <person name="Obermaier B."/>
            <person name="Piravandi E."/>
            <person name="Pohl T.M."/>
            <person name="Portetelle D."/>
            <person name="Purnelle B."/>
            <person name="Rechmann S."/>
            <person name="Rieger M."/>
            <person name="Rinke M."/>
            <person name="Rose M."/>
            <person name="Scharfe M."/>
            <person name="Scherens B."/>
            <person name="Scholler P."/>
            <person name="Schwager C."/>
            <person name="Schwarz S."/>
            <person name="Underwood A.P."/>
            <person name="Urrestarazu L.A."/>
            <person name="Vandenbol M."/>
            <person name="Verhasselt P."/>
            <person name="Vierendeels F."/>
            <person name="Voet M."/>
            <person name="Volckaert G."/>
            <person name="Voss H."/>
            <person name="Wambutt R."/>
            <person name="Wedler E."/>
            <person name="Wedler H."/>
            <person name="Zimmermann F.K."/>
            <person name="Zollner A."/>
            <person name="Hani J."/>
            <person name="Hoheisel J.D."/>
        </authorList>
    </citation>
    <scope>NUCLEOTIDE SEQUENCE [LARGE SCALE GENOMIC DNA]</scope>
    <source>
        <strain>ATCC 204508 / S288c</strain>
    </source>
</reference>
<reference key="5">
    <citation type="journal article" date="2014" name="G3 (Bethesda)">
        <title>The reference genome sequence of Saccharomyces cerevisiae: Then and now.</title>
        <authorList>
            <person name="Engel S.R."/>
            <person name="Dietrich F.S."/>
            <person name="Fisk D.G."/>
            <person name="Binkley G."/>
            <person name="Balakrishnan R."/>
            <person name="Costanzo M.C."/>
            <person name="Dwight S.S."/>
            <person name="Hitz B.C."/>
            <person name="Karra K."/>
            <person name="Nash R.S."/>
            <person name="Weng S."/>
            <person name="Wong E.D."/>
            <person name="Lloyd P."/>
            <person name="Skrzypek M.S."/>
            <person name="Miyasato S.R."/>
            <person name="Simison M."/>
            <person name="Cherry J.M."/>
        </authorList>
    </citation>
    <scope>GENOME REANNOTATION</scope>
    <source>
        <strain>ATCC 204508 / S288c</strain>
    </source>
</reference>
<reference key="6">
    <citation type="journal article" date="1999" name="Genes Cells">
        <title>Cooperation of two actin-binding proteins, cofilin and Aip1, in Saccharomyces cerevisiae.</title>
        <authorList>
            <person name="Iida K."/>
            <person name="Yahara I."/>
        </authorList>
    </citation>
    <scope>FUNCTION</scope>
    <scope>SUBCELLULAR LOCATION</scope>
</reference>
<reference key="7">
    <citation type="journal article" date="1999" name="J. Cell Biol.">
        <title>Aip1p interacts with cofilin to disassemble actin filaments.</title>
        <authorList>
            <person name="Rodal A.A."/>
            <person name="Tetreault J.W."/>
            <person name="Lappalainen P."/>
            <person name="Drubin D.G."/>
            <person name="Amberg D.C."/>
        </authorList>
    </citation>
    <scope>INTERACTION WITH AIP1</scope>
</reference>
<reference key="8">
    <citation type="journal article" date="2001" name="Biochemistry">
        <title>Identification of yeast cofilin residues specific for actin monomer and PIP2 binding.</title>
        <authorList>
            <person name="Ojala P.J."/>
            <person name="Paavilainen V."/>
            <person name="Lappalainen P."/>
        </authorList>
    </citation>
    <scope>FUNCTION</scope>
    <scope>MUTAGENESIS OF 105-LYS-ASP-106 AND 109-ARG-ARG-110</scope>
</reference>
<reference key="9">
    <citation type="journal article" date="2003" name="Nature">
        <title>Global analysis of protein expression in yeast.</title>
        <authorList>
            <person name="Ghaemmaghami S."/>
            <person name="Huh W.-K."/>
            <person name="Bower K."/>
            <person name="Howson R.W."/>
            <person name="Belle A."/>
            <person name="Dephoure N."/>
            <person name="O'Shea E.K."/>
            <person name="Weissman J.S."/>
        </authorList>
    </citation>
    <scope>LEVEL OF PROTEIN EXPRESSION [LARGE SCALE ANALYSIS]</scope>
</reference>
<reference key="10">
    <citation type="journal article" date="2008" name="Mol. Cell. Proteomics">
        <title>A multidimensional chromatography technology for in-depth phosphoproteome analysis.</title>
        <authorList>
            <person name="Albuquerque C.P."/>
            <person name="Smolka M.B."/>
            <person name="Payne S.H."/>
            <person name="Bafna V."/>
            <person name="Eng J."/>
            <person name="Zhou H."/>
        </authorList>
    </citation>
    <scope>PHOSPHORYLATION [LARGE SCALE ANALYSIS] AT SER-4</scope>
    <scope>IDENTIFICATION BY MASS SPECTROMETRY [LARGE SCALE ANALYSIS]</scope>
</reference>
<reference key="11">
    <citation type="journal article" date="2009" name="Science">
        <title>Global analysis of Cdk1 substrate phosphorylation sites provides insights into evolution.</title>
        <authorList>
            <person name="Holt L.J."/>
            <person name="Tuch B.B."/>
            <person name="Villen J."/>
            <person name="Johnson A.D."/>
            <person name="Gygi S.P."/>
            <person name="Morgan D.O."/>
        </authorList>
    </citation>
    <scope>PHOSPHORYLATION [LARGE SCALE ANALYSIS] AT SER-4</scope>
    <scope>IDENTIFICATION BY MASS SPECTROMETRY [LARGE SCALE ANALYSIS]</scope>
</reference>
<reference key="12">
    <citation type="journal article" date="1997" name="Nat. Struct. Biol.">
        <title>Structure determination of yeast cofilin.</title>
        <authorList>
            <person name="Fedorov A.A."/>
            <person name="Lappalainen P."/>
            <person name="Fedorov E.V."/>
            <person name="Drubin D.G."/>
            <person name="Almo S.C."/>
        </authorList>
    </citation>
    <scope>X-RAY CRYSTALLOGRAPHY (2.3 ANGSTROMS)</scope>
</reference>
<comment type="function">
    <text evidence="2 4">Controls reversibly actin polymerization and depolymerization in a pH-sensitive manner. It has the ability to bind G- and F-actin in a 1:1 ratio of cofilin to actin. Binding to F-actin is regulated by tropomyosin. It is the major component of intranuclear and cytoplasmic actin rods. Required for accumulation of actin at the cell division site via depolymerizing actin at the cell ends. In association with myosin II has a role in the assembly of the contractile ring via severing actin filaments. Involved in the maintenance of the contractile ring once formed. In association with profilin and capping protein, has a role in the mitotic reorganization of the actin cytoskeleton. In effect, yeast cofilin increases the rate of actin polymerization by making new ends available for actin subunit addition. Such a protein complex is important for the polarized growth of yeast cells.</text>
</comment>
<comment type="subunit">
    <text evidence="3">Interacts with actin and AIP1 in a ternary complex.</text>
</comment>
<comment type="interaction">
    <interactant intactId="EBI-4853">
        <id>Q03048</id>
    </interactant>
    <interactant intactId="EBI-2169">
        <id>P60010</id>
        <label>ACT1</label>
    </interactant>
    <organismsDiffer>false</organismsDiffer>
    <experiments>3</experiments>
</comment>
<comment type="interaction">
    <interactant intactId="EBI-4853">
        <id>Q03048</id>
    </interactant>
    <interactant intactId="EBI-21779">
        <id>P39109</id>
        <label>YCF1</label>
    </interactant>
    <organismsDiffer>false</organismsDiffer>
    <experiments>2</experiments>
</comment>
<comment type="interaction">
    <interactant intactId="EBI-4853">
        <id>Q03048</id>
    </interactant>
    <interactant intactId="EBI-367540">
        <id>P68135</id>
        <label>ACTA1</label>
    </interactant>
    <organismsDiffer>true</organismsDiffer>
    <experiments>3</experiments>
</comment>
<comment type="subcellular location">
    <subcellularLocation>
        <location evidence="2">Cytoplasm</location>
    </subcellularLocation>
    <subcellularLocation>
        <location evidence="2">Cytoplasm</location>
        <location evidence="2">Cytoskeleton</location>
    </subcellularLocation>
    <subcellularLocation>
        <location evidence="2">Nucleus matrix</location>
    </subcellularLocation>
    <text>Throughout the cytoplasm (but not on the cytoplasmic cables) and major component of the cortical actin cytoskeleton.</text>
</comment>
<comment type="PTM">
    <text>The N-terminus is blocked.</text>
</comment>
<comment type="miscellaneous">
    <text evidence="5">Present with 19600 molecules/cell in log phase SD medium.</text>
</comment>
<comment type="similarity">
    <text evidence="6">Belongs to the actin-binding proteins ADF family.</text>
</comment>
<accession>Q03048</accession>
<accession>D6VXV8</accession>
<accession>Q05307</accession>
<accession>Q2XN65</accession>
<proteinExistence type="evidence at protein level"/>
<organism>
    <name type="scientific">Saccharomyces cerevisiae (strain ATCC 204508 / S288c)</name>
    <name type="common">Baker's yeast</name>
    <dbReference type="NCBI Taxonomy" id="559292"/>
    <lineage>
        <taxon>Eukaryota</taxon>
        <taxon>Fungi</taxon>
        <taxon>Dikarya</taxon>
        <taxon>Ascomycota</taxon>
        <taxon>Saccharomycotina</taxon>
        <taxon>Saccharomycetes</taxon>
        <taxon>Saccharomycetales</taxon>
        <taxon>Saccharomycetaceae</taxon>
        <taxon>Saccharomyces</taxon>
    </lineage>
</organism>